<keyword id="KW-0025">Alternative splicing</keyword>
<keyword id="KW-0067">ATP-binding</keyword>
<keyword id="KW-0115">cAMP biosynthesis</keyword>
<keyword id="KW-1003">Cell membrane</keyword>
<keyword id="KW-0966">Cell projection</keyword>
<keyword id="KW-0963">Cytoplasm</keyword>
<keyword id="KW-0206">Cytoskeleton</keyword>
<keyword id="KW-0903">Direct protein sequencing</keyword>
<keyword id="KW-0456">Lyase</keyword>
<keyword id="KW-0460">Magnesium</keyword>
<keyword id="KW-0472">Membrane</keyword>
<keyword id="KW-0479">Metal-binding</keyword>
<keyword id="KW-0496">Mitochondrion</keyword>
<keyword id="KW-0547">Nucleotide-binding</keyword>
<keyword id="KW-0539">Nucleus</keyword>
<keyword id="KW-1185">Reference proteome</keyword>
<keyword id="KW-0677">Repeat</keyword>
<comment type="function">
    <text evidence="1 2 6">Catalyzes the formation of the signaling molecule cAMP (PubMed:9874775). May function as sensor that mediates responses to changes in cellular bicarbonate and CO(2) levels (By similarity). Has a critical role in mammalian spermatogenesis by producing the cAMP which regulates cAMP-responsive nuclear factors indispensable for sperm maturation in the epididymis. Induces capacitation, the maturational process that sperm undergo prior to fertilization (By similarity). Involved in ciliary beat regulation (By similarity).</text>
</comment>
<comment type="catalytic activity">
    <reaction evidence="5 6">
        <text>ATP = 3',5'-cyclic AMP + diphosphate</text>
        <dbReference type="Rhea" id="RHEA:15389"/>
        <dbReference type="ChEBI" id="CHEBI:30616"/>
        <dbReference type="ChEBI" id="CHEBI:33019"/>
        <dbReference type="ChEBI" id="CHEBI:58165"/>
        <dbReference type="EC" id="4.6.1.1"/>
    </reaction>
</comment>
<comment type="cofactor">
    <cofactor evidence="8">
        <name>Mg(2+)</name>
        <dbReference type="ChEBI" id="CHEBI:18420"/>
    </cofactor>
    <cofactor evidence="6">
        <name>Mn(2+)</name>
        <dbReference type="ChEBI" id="CHEBI:29035"/>
    </cofactor>
    <text evidence="2 6">Binds 2 magnesium ions per subunit (By similarity). Is also active with manganese (in vitro) (PubMed:9874775).</text>
</comment>
<comment type="activity regulation">
    <text evidence="2 5 6">Activated by manganese or magnesium ions (PubMed:9874775). In the presence of magnesium ions, the enzyme is activated by bicarbonate (PubMed:12609998). Calcium mildly increases the enzyme activity, also in the presence of magnesium ions.</text>
</comment>
<comment type="biophysicochemical properties">
    <kinetics>
        <KM evidence="6">1 mM for ATP-Mn(2+)</KM>
    </kinetics>
</comment>
<comment type="subcellular location">
    <subcellularLocation>
        <location evidence="2">Cell membrane</location>
        <topology evidence="2">Peripheral membrane protein</topology>
        <orientation evidence="2">Cytoplasmic side</orientation>
    </subcellularLocation>
    <subcellularLocation>
        <location evidence="2">Cytoplasm</location>
        <location evidence="2">Cytoskeleton</location>
    </subcellularLocation>
    <subcellularLocation>
        <location evidence="2">Cytoplasm</location>
        <location evidence="2">Perinuclear region</location>
    </subcellularLocation>
    <subcellularLocation>
        <location evidence="4">Nucleus</location>
    </subcellularLocation>
    <subcellularLocation>
        <location evidence="2">Cell projection</location>
        <location evidence="2">Cilium</location>
    </subcellularLocation>
    <subcellularLocation>
        <location evidence="6">Cytoplasm</location>
    </subcellularLocation>
    <subcellularLocation>
        <location evidence="4">Mitochondrion</location>
    </subcellularLocation>
    <text evidence="2">Distributed to subcellular compartments containing cAMP targets. Found as a plasma membrane-associated protein, protein concentrated in the perinuclear region and protein colocalized with actin or tubulin.</text>
</comment>
<comment type="alternative products">
    <event type="alternative splicing"/>
    <isoform>
        <id>Q9Z286-1</id>
        <name>1</name>
        <sequence type="displayed"/>
    </isoform>
    <text>A number of isoforms are produced.</text>
</comment>
<comment type="tissue specificity">
    <text evidence="6">Detected in testis (at protein level). Preferentially expressed in testis.</text>
</comment>
<comment type="domain">
    <text evidence="6">The N-terminal guanylate cyclase domains are required for enzyme activity. Fragments containing the first 470 amino acid residues are fully active.</text>
</comment>
<comment type="PTM">
    <text evidence="8">Cleavage may occur to generate the active 48 kDa form.</text>
</comment>
<comment type="similarity">
    <text evidence="3">Belongs to the adenylyl cyclase class-4/guanylyl cyclase family.</text>
</comment>
<sequence length="1608" mass="185854">MSARRQELQDRAIVKIAAHLPDLIVYGDFSPERPSVKCFDGVLMFVDISGFTAMTEKFSTAMYMDRGAEQLVEILNYYISAIVEKVLIFGGDILKFAGDALLALWKVERKQLKNIITVVIKCSLEIHGLFEAKEVEEGLDIRVKIGLAAGHITMLVFGDETRNYFLVIGQAVDDVRLAQNMAQMNDVILSPNCWQLCDRSMIEIERIPDQRAVKVSFLKPPPTFNFDEFFAKCMAFMDYYPSGDHKNFLRLACMLESDPELELSLQKYVMEIILKQIDDKQLRGYLSELRPVTIVFVNLMFKEQDKAEVIGSAIQAACVHITSVLKVFRGQINKVFMFDKGCSFLCVFGFPGEKAPDEITHALESAVDIFDFCSQVHKIRTVSIGVASGIVFCGIVGHTVRHEYTVIGQKVNIAARMMMYYPGIVTCDSVTYDGSNLPAYFFKELPKKVMKGVADPGPVYQCLGLNEKVMFGMAYLICNRYEGYPLLGRVREIDYFMSTMKDFLMTNCSRVLMYEGLPGYGKSQVLMEIEYLASQHENHRAVAIALTKISFHQNFYTIQILMANVLGLDTCKHYKERQTNLQNRVKTLLDDKYHCLLNDIFHVQFPVSREMSRMSKIRKQKQLEALFMKILEQTVREERIIFIIDEAQFVDVASWAFIEKLIRSMPIFIVMSLCPFPETPCAAANAIMKNRNTTYITLGTMQPQEIRDKVCVDLSVSSIPRELDSYLVEGSCGIPYYCEELLKNLDHHRILIFQQAEAEEKTNVTWNNLFKYSVKPTEDMYLYTSIAAGQKEACYLTSGVRLKNLSPPASLKEISLVQLDSMSLSHQMLVRCAAIIGLTFTTELLFEILPCWNMKMMIKALATLVESNVFDCFRSSKDLQLALKQNVTTFEVHYRSLSLKSKEGLAYSEEEQLREMEGEVIECRILRFCRPIMQKTAYELWLKDQKKVLHLKCARFLEESAHRCNHCRNRDFIPYHHFIADIRLNTLDMDTVKKMVKSHGFKTEDEVIFSKSEIPRKFKFPENISITETREKILHFFDNVIIKMRTSQDDVIPLESCHCEELLQIVILPLAQHFVALEENNKALYYFLELASAYLILGDNYNAYMYLGEGERLLKSLTNEDSWSQTFEYATFYSLKGEICFNMGQMVLAKKMLRKALKLLNRMFPCNLLSLTFQMHIEKNRLSHFMNQHTQEGSLPGKKLAQLFLQSSCFSLLWKIYSLNFFFHYKYYGRLAAIMQMNTSLETQNNFQIIKAFLDFSLYRHLAGYEGVWFKYEILVMEQLLNLPLKGEAFEIMAYAADALGHIKFLTGHLDLAIELGSRAHKMWSLLRNPNKYHMVLCRLSKPLFLKSRYKHLVQVLGWLWDLSVTEEHIFSKAFFYFVCLDIMLYSGFIYRTFEECLEFIHHNEDNRILKFQSGLLLGLYSCIAVWYARLQEWDNFYKFSNRAKTLVTRRTPTVLYYEGISRYMEGQVLHLQKQIEEQAENAQDSGVELLKALETLVAQNTTGPVFYPRLYHLMAYVCILMGDGHSCDFFLNTALELSETQGNLLEKCWLSMSKEWWYSAPELTGDQWLQTVLSLPSWDKIVSGNVTLQDVQKNKFLMRVNILDNPF</sequence>
<accession>Q9Z286</accession>
<evidence type="ECO:0000250" key="1">
    <source>
        <dbReference type="UniProtKB" id="Q8C0T9"/>
    </source>
</evidence>
<evidence type="ECO:0000250" key="2">
    <source>
        <dbReference type="UniProtKB" id="Q96PN6"/>
    </source>
</evidence>
<evidence type="ECO:0000255" key="3">
    <source>
        <dbReference type="PROSITE-ProRule" id="PRU00099"/>
    </source>
</evidence>
<evidence type="ECO:0000269" key="4">
    <source>
    </source>
</evidence>
<evidence type="ECO:0000269" key="5">
    <source>
    </source>
</evidence>
<evidence type="ECO:0000269" key="6">
    <source>
    </source>
</evidence>
<evidence type="ECO:0000303" key="7">
    <source>
    </source>
</evidence>
<evidence type="ECO:0000305" key="8">
    <source>
    </source>
</evidence>
<feature type="chain" id="PRO_0000317104" description="Adenylate cyclase type 10">
    <location>
        <begin position="1"/>
        <end position="1608"/>
    </location>
</feature>
<feature type="domain" description="Guanylate cyclase 1" evidence="3">
    <location>
        <begin position="42"/>
        <end position="179"/>
    </location>
</feature>
<feature type="domain" description="Guanylate cyclase 2" evidence="3">
    <location>
        <begin position="293"/>
        <end position="418"/>
    </location>
</feature>
<feature type="binding site" evidence="2">
    <location>
        <begin position="47"/>
        <end position="52"/>
    </location>
    <ligand>
        <name>ATP</name>
        <dbReference type="ChEBI" id="CHEBI:30616"/>
    </ligand>
</feature>
<feature type="binding site" evidence="3">
    <location>
        <position position="47"/>
    </location>
    <ligand>
        <name>Mg(2+)</name>
        <dbReference type="ChEBI" id="CHEBI:18420"/>
        <label>1</label>
    </ligand>
</feature>
<feature type="binding site" evidence="3">
    <location>
        <position position="47"/>
    </location>
    <ligand>
        <name>Mg(2+)</name>
        <dbReference type="ChEBI" id="CHEBI:18420"/>
        <label>2</label>
    </ligand>
</feature>
<feature type="binding site" evidence="3">
    <location>
        <position position="48"/>
    </location>
    <ligand>
        <name>Mg(2+)</name>
        <dbReference type="ChEBI" id="CHEBI:18420"/>
        <label>2</label>
    </ligand>
</feature>
<feature type="binding site" evidence="2">
    <location>
        <position position="95"/>
    </location>
    <ligand>
        <name>hydrogencarbonate</name>
        <dbReference type="ChEBI" id="CHEBI:17544"/>
    </ligand>
</feature>
<feature type="binding site" evidence="2">
    <location>
        <position position="99"/>
    </location>
    <ligand>
        <name>ATP</name>
        <dbReference type="ChEBI" id="CHEBI:30616"/>
    </ligand>
</feature>
<feature type="binding site" evidence="3">
    <location>
        <position position="99"/>
    </location>
    <ligand>
        <name>Mg(2+)</name>
        <dbReference type="ChEBI" id="CHEBI:18420"/>
        <label>1</label>
    </ligand>
</feature>
<feature type="binding site" evidence="3">
    <location>
        <position position="99"/>
    </location>
    <ligand>
        <name>Mg(2+)</name>
        <dbReference type="ChEBI" id="CHEBI:18420"/>
        <label>2</label>
    </ligand>
</feature>
<feature type="binding site" evidence="2">
    <location>
        <position position="144"/>
    </location>
    <ligand>
        <name>ATP</name>
        <dbReference type="ChEBI" id="CHEBI:30616"/>
    </ligand>
</feature>
<feature type="binding site" evidence="2">
    <location>
        <position position="167"/>
    </location>
    <ligand>
        <name>hydrogencarbonate</name>
        <dbReference type="ChEBI" id="CHEBI:17544"/>
    </ligand>
</feature>
<feature type="binding site" evidence="2">
    <location>
        <position position="176"/>
    </location>
    <ligand>
        <name>hydrogencarbonate</name>
        <dbReference type="ChEBI" id="CHEBI:17544"/>
    </ligand>
</feature>
<feature type="binding site" evidence="2">
    <location>
        <position position="337"/>
    </location>
    <ligand>
        <name>hydrogencarbonate</name>
        <dbReference type="ChEBI" id="CHEBI:17544"/>
    </ligand>
</feature>
<feature type="binding site" evidence="2">
    <location>
        <position position="406"/>
    </location>
    <ligand>
        <name>ATP</name>
        <dbReference type="ChEBI" id="CHEBI:30616"/>
    </ligand>
</feature>
<feature type="binding site" evidence="2">
    <location>
        <begin position="412"/>
        <end position="416"/>
    </location>
    <ligand>
        <name>ATP</name>
        <dbReference type="ChEBI" id="CHEBI:30616"/>
    </ligand>
</feature>
<organism>
    <name type="scientific">Rattus norvegicus</name>
    <name type="common">Rat</name>
    <dbReference type="NCBI Taxonomy" id="10116"/>
    <lineage>
        <taxon>Eukaryota</taxon>
        <taxon>Metazoa</taxon>
        <taxon>Chordata</taxon>
        <taxon>Craniata</taxon>
        <taxon>Vertebrata</taxon>
        <taxon>Euteleostomi</taxon>
        <taxon>Mammalia</taxon>
        <taxon>Eutheria</taxon>
        <taxon>Euarchontoglires</taxon>
        <taxon>Glires</taxon>
        <taxon>Rodentia</taxon>
        <taxon>Myomorpha</taxon>
        <taxon>Muroidea</taxon>
        <taxon>Muridae</taxon>
        <taxon>Murinae</taxon>
        <taxon>Rattus</taxon>
    </lineage>
</organism>
<gene>
    <name type="primary">Adcy10</name>
    <name type="synonym">Sac</name>
</gene>
<protein>
    <recommendedName>
        <fullName>Adenylate cyclase type 10</fullName>
        <ecNumber evidence="5 6">4.6.1.1</ecNumber>
    </recommendedName>
    <alternativeName>
        <fullName evidence="7">Germ cell soluble adenylyl cyclase</fullName>
        <shortName>sAC</shortName>
    </alternativeName>
    <alternativeName>
        <fullName>Testicular soluble adenylyl cyclase</fullName>
    </alternativeName>
</protein>
<dbReference type="EC" id="4.6.1.1" evidence="5 6"/>
<dbReference type="EMBL" id="AF081941">
    <property type="protein sequence ID" value="AAD04035.1"/>
    <property type="molecule type" value="mRNA"/>
</dbReference>
<dbReference type="PIR" id="T17201">
    <property type="entry name" value="T17201"/>
</dbReference>
<dbReference type="RefSeq" id="NP_067716.1">
    <molecule id="Q9Z286-1"/>
    <property type="nucleotide sequence ID" value="NM_021684.1"/>
</dbReference>
<dbReference type="RefSeq" id="XP_008767899.1">
    <molecule id="Q9Z286-1"/>
    <property type="nucleotide sequence ID" value="XM_008769677.4"/>
</dbReference>
<dbReference type="RefSeq" id="XP_008767900.1">
    <molecule id="Q9Z286-1"/>
    <property type="nucleotide sequence ID" value="XM_008769678.4"/>
</dbReference>
<dbReference type="RefSeq" id="XP_008767901.1">
    <property type="nucleotide sequence ID" value="XM_008769679.2"/>
</dbReference>
<dbReference type="RefSeq" id="XP_063128634.1">
    <molecule id="Q9Z286-1"/>
    <property type="nucleotide sequence ID" value="XM_063272564.1"/>
</dbReference>
<dbReference type="SMR" id="Q9Z286"/>
<dbReference type="FunCoup" id="Q9Z286">
    <property type="interactions" value="10"/>
</dbReference>
<dbReference type="STRING" id="10116.ENSRNOP00000072356"/>
<dbReference type="BindingDB" id="Q9Z286"/>
<dbReference type="ChEMBL" id="CHEMBL5169208"/>
<dbReference type="PhosphoSitePlus" id="Q9Z286"/>
<dbReference type="PaxDb" id="10116-ENSRNOP00000004326"/>
<dbReference type="Ensembl" id="ENSRNOT00000082677.2">
    <molecule id="Q9Z286-1"/>
    <property type="protein sequence ID" value="ENSRNOP00000072356.1"/>
    <property type="gene ID" value="ENSRNOG00000053410.2"/>
</dbReference>
<dbReference type="GeneID" id="59320"/>
<dbReference type="KEGG" id="rno:59320"/>
<dbReference type="UCSC" id="RGD:708450">
    <molecule id="Q9Z286-1"/>
    <property type="organism name" value="rat"/>
</dbReference>
<dbReference type="AGR" id="RGD:708450"/>
<dbReference type="CTD" id="55811"/>
<dbReference type="RGD" id="708450">
    <property type="gene designation" value="Adcy10"/>
</dbReference>
<dbReference type="eggNOG" id="ENOG502QPPT">
    <property type="taxonomic scope" value="Eukaryota"/>
</dbReference>
<dbReference type="GeneTree" id="ENSGT00390000001322"/>
<dbReference type="HOGENOM" id="CLU_004055_1_0_1"/>
<dbReference type="InParanoid" id="Q9Z286"/>
<dbReference type="OMA" id="HIIRFCK"/>
<dbReference type="OrthoDB" id="194468at2759"/>
<dbReference type="PhylomeDB" id="Q9Z286"/>
<dbReference type="BRENDA" id="4.6.1.1">
    <property type="organism ID" value="5301"/>
</dbReference>
<dbReference type="Reactome" id="R-RNO-5610787">
    <property type="pathway name" value="Hedgehog 'off' state"/>
</dbReference>
<dbReference type="SABIO-RK" id="Q9Z286"/>
<dbReference type="PRO" id="PR:Q9Z286"/>
<dbReference type="Proteomes" id="UP000002494">
    <property type="component" value="Chromosome 13"/>
</dbReference>
<dbReference type="Bgee" id="ENSRNOG00000053410">
    <property type="expression patterns" value="Expressed in testis and 7 other cell types or tissues"/>
</dbReference>
<dbReference type="GO" id="GO:0045177">
    <property type="term" value="C:apical part of cell"/>
    <property type="evidence" value="ECO:0000314"/>
    <property type="project" value="RGD"/>
</dbReference>
<dbReference type="GO" id="GO:0016324">
    <property type="term" value="C:apical plasma membrane"/>
    <property type="evidence" value="ECO:0000266"/>
    <property type="project" value="RGD"/>
</dbReference>
<dbReference type="GO" id="GO:0097450">
    <property type="term" value="C:astrocyte end-foot"/>
    <property type="evidence" value="ECO:0000314"/>
    <property type="project" value="RGD"/>
</dbReference>
<dbReference type="GO" id="GO:0030424">
    <property type="term" value="C:axon"/>
    <property type="evidence" value="ECO:0000314"/>
    <property type="project" value="RGD"/>
</dbReference>
<dbReference type="GO" id="GO:0045178">
    <property type="term" value="C:basal part of cell"/>
    <property type="evidence" value="ECO:0000314"/>
    <property type="project" value="RGD"/>
</dbReference>
<dbReference type="GO" id="GO:0090724">
    <property type="term" value="C:central region of growth cone"/>
    <property type="evidence" value="ECO:0000314"/>
    <property type="project" value="RGD"/>
</dbReference>
<dbReference type="GO" id="GO:0005737">
    <property type="term" value="C:cytoplasm"/>
    <property type="evidence" value="ECO:0000314"/>
    <property type="project" value="RGD"/>
</dbReference>
<dbReference type="GO" id="GO:0005829">
    <property type="term" value="C:cytosol"/>
    <property type="evidence" value="ECO:0000314"/>
    <property type="project" value="RGD"/>
</dbReference>
<dbReference type="GO" id="GO:0030425">
    <property type="term" value="C:dendrite"/>
    <property type="evidence" value="ECO:0000314"/>
    <property type="project" value="RGD"/>
</dbReference>
<dbReference type="GO" id="GO:0005576">
    <property type="term" value="C:extracellular region"/>
    <property type="evidence" value="ECO:0007669"/>
    <property type="project" value="GOC"/>
</dbReference>
<dbReference type="GO" id="GO:0030426">
    <property type="term" value="C:growth cone"/>
    <property type="evidence" value="ECO:0000314"/>
    <property type="project" value="RGD"/>
</dbReference>
<dbReference type="GO" id="GO:0016020">
    <property type="term" value="C:membrane"/>
    <property type="evidence" value="ECO:0000266"/>
    <property type="project" value="RGD"/>
</dbReference>
<dbReference type="GO" id="GO:0015630">
    <property type="term" value="C:microtubule cytoskeleton"/>
    <property type="evidence" value="ECO:0000266"/>
    <property type="project" value="RGD"/>
</dbReference>
<dbReference type="GO" id="GO:0005739">
    <property type="term" value="C:mitochondrion"/>
    <property type="evidence" value="ECO:0000314"/>
    <property type="project" value="RGD"/>
</dbReference>
<dbReference type="GO" id="GO:0031514">
    <property type="term" value="C:motile cilium"/>
    <property type="evidence" value="ECO:0000266"/>
    <property type="project" value="RGD"/>
</dbReference>
<dbReference type="GO" id="GO:0043025">
    <property type="term" value="C:neuronal cell body"/>
    <property type="evidence" value="ECO:0000314"/>
    <property type="project" value="RGD"/>
</dbReference>
<dbReference type="GO" id="GO:0005634">
    <property type="term" value="C:nucleus"/>
    <property type="evidence" value="ECO:0000314"/>
    <property type="project" value="RGD"/>
</dbReference>
<dbReference type="GO" id="GO:0048471">
    <property type="term" value="C:perinuclear region of cytoplasm"/>
    <property type="evidence" value="ECO:0000250"/>
    <property type="project" value="UniProtKB"/>
</dbReference>
<dbReference type="GO" id="GO:0004016">
    <property type="term" value="F:adenylate cyclase activity"/>
    <property type="evidence" value="ECO:0000314"/>
    <property type="project" value="RGD"/>
</dbReference>
<dbReference type="GO" id="GO:0005524">
    <property type="term" value="F:ATP binding"/>
    <property type="evidence" value="ECO:0007669"/>
    <property type="project" value="UniProtKB-KW"/>
</dbReference>
<dbReference type="GO" id="GO:0051117">
    <property type="term" value="F:ATPase binding"/>
    <property type="evidence" value="ECO:0000353"/>
    <property type="project" value="RGD"/>
</dbReference>
<dbReference type="GO" id="GO:0071890">
    <property type="term" value="F:bicarbonate binding"/>
    <property type="evidence" value="ECO:0000250"/>
    <property type="project" value="UniProtKB"/>
</dbReference>
<dbReference type="GO" id="GO:0000287">
    <property type="term" value="F:magnesium ion binding"/>
    <property type="evidence" value="ECO:0007669"/>
    <property type="project" value="InterPro"/>
</dbReference>
<dbReference type="GO" id="GO:0030145">
    <property type="term" value="F:manganese ion binding"/>
    <property type="evidence" value="ECO:0000314"/>
    <property type="project" value="RGD"/>
</dbReference>
<dbReference type="GO" id="GO:0006171">
    <property type="term" value="P:cAMP biosynthetic process"/>
    <property type="evidence" value="ECO:0000314"/>
    <property type="project" value="RGD"/>
</dbReference>
<dbReference type="GO" id="GO:0003351">
    <property type="term" value="P:epithelial cilium movement involved in extracellular fluid movement"/>
    <property type="evidence" value="ECO:0000250"/>
    <property type="project" value="UniProtKB"/>
</dbReference>
<dbReference type="GO" id="GO:0006007">
    <property type="term" value="P:glucose catabolic process"/>
    <property type="evidence" value="ECO:0000315"/>
    <property type="project" value="RGD"/>
</dbReference>
<dbReference type="GO" id="GO:0035556">
    <property type="term" value="P:intracellular signal transduction"/>
    <property type="evidence" value="ECO:0007669"/>
    <property type="project" value="InterPro"/>
</dbReference>
<dbReference type="GO" id="GO:1990544">
    <property type="term" value="P:mitochondrial ATP transmembrane transport"/>
    <property type="evidence" value="ECO:0000315"/>
    <property type="project" value="RGD"/>
</dbReference>
<dbReference type="GO" id="GO:0106135">
    <property type="term" value="P:negative regulation of cardiac muscle cell contraction"/>
    <property type="evidence" value="ECO:0000315"/>
    <property type="project" value="RGD"/>
</dbReference>
<dbReference type="GO" id="GO:0010917">
    <property type="term" value="P:negative regulation of mitochondrial membrane potential"/>
    <property type="evidence" value="ECO:0000315"/>
    <property type="project" value="RGD"/>
</dbReference>
<dbReference type="GO" id="GO:1903427">
    <property type="term" value="P:negative regulation of reactive oxygen species biosynthetic process"/>
    <property type="evidence" value="ECO:0000315"/>
    <property type="project" value="RGD"/>
</dbReference>
<dbReference type="GO" id="GO:1990138">
    <property type="term" value="P:neuron projection extension"/>
    <property type="evidence" value="ECO:0000315"/>
    <property type="project" value="RGD"/>
</dbReference>
<dbReference type="GO" id="GO:1990535">
    <property type="term" value="P:neuron projection maintenance"/>
    <property type="evidence" value="ECO:0000315"/>
    <property type="project" value="RGD"/>
</dbReference>
<dbReference type="GO" id="GO:0106028">
    <property type="term" value="P:neuron projection retraction"/>
    <property type="evidence" value="ECO:0000315"/>
    <property type="project" value="RGD"/>
</dbReference>
<dbReference type="GO" id="GO:0043065">
    <property type="term" value="P:positive regulation of apoptotic process"/>
    <property type="evidence" value="ECO:0000315"/>
    <property type="project" value="RGD"/>
</dbReference>
<dbReference type="GO" id="GO:2001171">
    <property type="term" value="P:positive regulation of ATP biosynthetic process"/>
    <property type="evidence" value="ECO:0000315"/>
    <property type="project" value="RGD"/>
</dbReference>
<dbReference type="GO" id="GO:0045773">
    <property type="term" value="P:positive regulation of axon extension"/>
    <property type="evidence" value="ECO:0000315"/>
    <property type="project" value="RGD"/>
</dbReference>
<dbReference type="GO" id="GO:0010666">
    <property type="term" value="P:positive regulation of cardiac muscle cell apoptotic process"/>
    <property type="evidence" value="ECO:0000315"/>
    <property type="project" value="RGD"/>
</dbReference>
<dbReference type="GO" id="GO:0010613">
    <property type="term" value="P:positive regulation of cardiac muscle hypertrophy"/>
    <property type="evidence" value="ECO:0000315"/>
    <property type="project" value="RGD"/>
</dbReference>
<dbReference type="GO" id="GO:0045819">
    <property type="term" value="P:positive regulation of glycogen catabolic process"/>
    <property type="evidence" value="ECO:0000315"/>
    <property type="project" value="RGD"/>
</dbReference>
<dbReference type="GO" id="GO:2001244">
    <property type="term" value="P:positive regulation of intrinsic apoptotic signaling pathway"/>
    <property type="evidence" value="ECO:0000314"/>
    <property type="project" value="RGD"/>
</dbReference>
<dbReference type="GO" id="GO:0051901">
    <property type="term" value="P:positive regulation of mitochondrial depolarization"/>
    <property type="evidence" value="ECO:0000315"/>
    <property type="project" value="RGD"/>
</dbReference>
<dbReference type="GO" id="GO:0045778">
    <property type="term" value="P:positive regulation of ossification"/>
    <property type="evidence" value="ECO:0000315"/>
    <property type="project" value="RGD"/>
</dbReference>
<dbReference type="GO" id="GO:1903378">
    <property type="term" value="P:positive regulation of oxidative stress-induced neuron intrinsic apoptotic signaling pathway"/>
    <property type="evidence" value="ECO:0000315"/>
    <property type="project" value="RGD"/>
</dbReference>
<dbReference type="GO" id="GO:1903955">
    <property type="term" value="P:positive regulation of protein targeting to mitochondrion"/>
    <property type="evidence" value="ECO:0000315"/>
    <property type="project" value="RGD"/>
</dbReference>
<dbReference type="GO" id="GO:1903428">
    <property type="term" value="P:positive regulation of reactive oxygen species biosynthetic process"/>
    <property type="evidence" value="ECO:0000315"/>
    <property type="project" value="RGD"/>
</dbReference>
<dbReference type="GO" id="GO:1905461">
    <property type="term" value="P:positive regulation of vascular associated smooth muscle cell apoptotic process"/>
    <property type="evidence" value="ECO:0000314"/>
    <property type="project" value="RGD"/>
</dbReference>
<dbReference type="GO" id="GO:0060306">
    <property type="term" value="P:regulation of membrane repolarization"/>
    <property type="evidence" value="ECO:0000315"/>
    <property type="project" value="RGD"/>
</dbReference>
<dbReference type="GO" id="GO:1901524">
    <property type="term" value="P:regulation of mitophagy"/>
    <property type="evidence" value="ECO:0000315"/>
    <property type="project" value="RGD"/>
</dbReference>
<dbReference type="GO" id="GO:0007286">
    <property type="term" value="P:spermatid development"/>
    <property type="evidence" value="ECO:0000270"/>
    <property type="project" value="RGD"/>
</dbReference>
<dbReference type="CDD" id="cd07302">
    <property type="entry name" value="CHD"/>
    <property type="match status" value="2"/>
</dbReference>
<dbReference type="FunFam" id="3.30.70.1230:FF:000017">
    <property type="entry name" value="Adenylate cyclase type 10"/>
    <property type="match status" value="1"/>
</dbReference>
<dbReference type="FunFam" id="3.30.70.1230:FF:000021">
    <property type="entry name" value="Adenylate cyclase type 10"/>
    <property type="match status" value="1"/>
</dbReference>
<dbReference type="FunFam" id="3.40.50.300:FF:001623">
    <property type="entry name" value="Adenylate cyclase type 10"/>
    <property type="match status" value="1"/>
</dbReference>
<dbReference type="Gene3D" id="3.30.70.1230">
    <property type="entry name" value="Nucleotide cyclase"/>
    <property type="match status" value="2"/>
</dbReference>
<dbReference type="Gene3D" id="3.40.50.300">
    <property type="entry name" value="P-loop containing nucleotide triphosphate hydrolases"/>
    <property type="match status" value="1"/>
</dbReference>
<dbReference type="InterPro" id="IPR001054">
    <property type="entry name" value="A/G_cyclase"/>
</dbReference>
<dbReference type="InterPro" id="IPR016577">
    <property type="entry name" value="Adenylate_cyclase_typ10"/>
</dbReference>
<dbReference type="InterPro" id="IPR029787">
    <property type="entry name" value="Nucleotide_cyclase"/>
</dbReference>
<dbReference type="InterPro" id="IPR027417">
    <property type="entry name" value="P-loop_NTPase"/>
</dbReference>
<dbReference type="InterPro" id="IPR011990">
    <property type="entry name" value="TPR-like_helical_dom_sf"/>
</dbReference>
<dbReference type="PANTHER" id="PTHR16305:SF32">
    <property type="entry name" value="ADENYLATE CYCLASE TYPE 10"/>
    <property type="match status" value="1"/>
</dbReference>
<dbReference type="PANTHER" id="PTHR16305">
    <property type="entry name" value="TESTICULAR SOLUBLE ADENYLYL CYCLASE"/>
    <property type="match status" value="1"/>
</dbReference>
<dbReference type="Pfam" id="PF00211">
    <property type="entry name" value="Guanylate_cyc"/>
    <property type="match status" value="2"/>
</dbReference>
<dbReference type="PIRSF" id="PIRSF011131">
    <property type="entry name" value="Soluble_adenylyl_cyclase"/>
    <property type="match status" value="1"/>
</dbReference>
<dbReference type="SMART" id="SM00044">
    <property type="entry name" value="CYCc"/>
    <property type="match status" value="1"/>
</dbReference>
<dbReference type="SUPFAM" id="SSF55073">
    <property type="entry name" value="Nucleotide cyclase"/>
    <property type="match status" value="2"/>
</dbReference>
<dbReference type="SUPFAM" id="SSF52540">
    <property type="entry name" value="P-loop containing nucleoside triphosphate hydrolases"/>
    <property type="match status" value="1"/>
</dbReference>
<dbReference type="SUPFAM" id="SSF48452">
    <property type="entry name" value="TPR-like"/>
    <property type="match status" value="1"/>
</dbReference>
<dbReference type="PROSITE" id="PS50125">
    <property type="entry name" value="GUANYLATE_CYCLASE_2"/>
    <property type="match status" value="2"/>
</dbReference>
<reference key="1">
    <citation type="journal article" date="1999" name="Proc. Natl. Acad. Sci. U.S.A.">
        <title>Cytosolic adenylyl cyclase defines a unique signaling molecule in mammals.</title>
        <authorList>
            <person name="Buck J."/>
            <person name="Sinclair M.L."/>
            <person name="Schapal L."/>
            <person name="Cann M.J."/>
            <person name="Levin L.R."/>
        </authorList>
    </citation>
    <scope>NUCLEOTIDE SEQUENCE [MRNA]</scope>
    <scope>PROTEIN SEQUENCE OF 60-67; 254-262 AND 402-409</scope>
    <scope>BIOPHYSICOCHEMICAL PROPERTIES</scope>
    <scope>CATALYTIC ACTIVITY</scope>
    <scope>TISSUE SPECIFICITY</scope>
    <scope>SUBCELLULAR LOCATION</scope>
    <scope>DOMAIN</scope>
    <scope>COFACTOR</scope>
    <source>
        <strain>Sprague-Dawley</strain>
        <tissue>Testis</tissue>
    </source>
</reference>
<reference key="2">
    <citation type="journal article" date="2001" name="J. Biol. Chem.">
        <title>Identification and functional analysis of splice variants of the germ cell soluble adenylyl cyclase.</title>
        <authorList>
            <person name="Jaiswal B.S."/>
            <person name="Conti M."/>
        </authorList>
    </citation>
    <scope>ALTERNATIVE SPLICING</scope>
</reference>
<reference key="3">
    <citation type="journal article" date="2003" name="FASEB J.">
        <title>Compartmentalization of bicarbonate-sensitive adenylyl cyclase in distinct signaling microdomains.</title>
        <authorList>
            <person name="Zippin J.H."/>
            <person name="Chen Y."/>
            <person name="Nahirney P."/>
            <person name="Kamenetsky M."/>
            <person name="Wuttke M.S."/>
            <person name="Fischman D.A."/>
            <person name="Levin L.R."/>
            <person name="Buck J."/>
        </authorList>
    </citation>
    <scope>SUBCELLULAR LOCATION</scope>
</reference>
<reference key="4">
    <citation type="journal article" date="2003" name="J. Biol. Chem.">
        <title>Kinetic properties of 'soluble' adenylyl cyclase. Synergism between calcium and bicarbonate.</title>
        <authorList>
            <person name="Litvin T.N."/>
            <person name="Kamenetsky M."/>
            <person name="Zarifyan A."/>
            <person name="Buck J."/>
            <person name="Levin L.R."/>
        </authorList>
    </citation>
    <scope>CATALYTIC ACTIVITY</scope>
    <scope>ACTIVITY REGULATION</scope>
</reference>
<proteinExistence type="evidence at protein level"/>
<name>ADCYA_RAT</name>